<name>CUTI1_VERDA</name>
<keyword id="KW-1015">Disulfide bond</keyword>
<keyword id="KW-0378">Hydrolase</keyword>
<keyword id="KW-1185">Reference proteome</keyword>
<keyword id="KW-0964">Secreted</keyword>
<keyword id="KW-0732">Signal</keyword>
<keyword id="KW-0843">Virulence</keyword>
<evidence type="ECO:0000250" key="1">
    <source>
        <dbReference type="UniProtKB" id="P00590"/>
    </source>
</evidence>
<evidence type="ECO:0000250" key="2">
    <source>
        <dbReference type="UniProtKB" id="P11373"/>
    </source>
</evidence>
<evidence type="ECO:0000255" key="3"/>
<evidence type="ECO:0000255" key="4">
    <source>
        <dbReference type="PROSITE-ProRule" id="PRU00597"/>
    </source>
</evidence>
<evidence type="ECO:0000256" key="5">
    <source>
        <dbReference type="SAM" id="MobiDB-lite"/>
    </source>
</evidence>
<evidence type="ECO:0000269" key="6">
    <source>
    </source>
</evidence>
<evidence type="ECO:0000303" key="7">
    <source>
    </source>
</evidence>
<evidence type="ECO:0000305" key="8"/>
<evidence type="ECO:0000305" key="9">
    <source>
    </source>
</evidence>
<evidence type="ECO:0000312" key="10">
    <source>
        <dbReference type="EMBL" id="PNH49577.1"/>
    </source>
</evidence>
<evidence type="ECO:0000312" key="11">
    <source>
        <dbReference type="EMBL" id="RBQ90445.1"/>
    </source>
</evidence>
<evidence type="ECO:0000312" key="12">
    <source>
        <dbReference type="EMBL" id="RXG42413.1"/>
    </source>
</evidence>
<evidence type="ECO:0000312" key="13">
    <source>
        <dbReference type="Proteomes" id="UP000288725"/>
    </source>
</evidence>
<feature type="signal peptide" evidence="3">
    <location>
        <begin position="1"/>
        <end position="17"/>
    </location>
</feature>
<feature type="chain" id="PRO_5029353846" description="Cutinase 11" evidence="3">
    <location>
        <begin position="18"/>
        <end position="295"/>
    </location>
</feature>
<feature type="domain" description="CBM1" evidence="4">
    <location>
        <begin position="260"/>
        <end position="295"/>
    </location>
</feature>
<feature type="region of interest" description="Disordered" evidence="5">
    <location>
        <begin position="228"/>
        <end position="258"/>
    </location>
</feature>
<feature type="compositionally biased region" description="Pro residues" evidence="5">
    <location>
        <begin position="236"/>
        <end position="258"/>
    </location>
</feature>
<feature type="active site" evidence="6">
    <location>
        <position position="113"/>
    </location>
</feature>
<feature type="active site" evidence="6">
    <location>
        <position position="198"/>
    </location>
</feature>
<feature type="active site" evidence="6">
    <location>
        <position position="210"/>
    </location>
</feature>
<feature type="disulfide bond" evidence="1">
    <location>
        <begin position="25"/>
        <end position="102"/>
    </location>
</feature>
<feature type="disulfide bond" evidence="1">
    <location>
        <begin position="184"/>
        <end position="202"/>
    </location>
</feature>
<feature type="mutagenesis site" description="Loss of enzymatic activity and attenuates virulence; when associated with A-198 and A-210." evidence="6">
    <original>S</original>
    <variation>A</variation>
    <location>
        <position position="113"/>
    </location>
</feature>
<feature type="mutagenesis site" description="Loss of enzymatic activity and attenuates virulence; when associated with A-113 and A-210." evidence="6">
    <original>D</original>
    <variation>A</variation>
    <location>
        <position position="198"/>
    </location>
</feature>
<feature type="mutagenesis site" description="Loss of enzymatic activity and attenuates virulence; when associated with A-113 and A-198." evidence="6">
    <original>H</original>
    <variation>A</variation>
    <location>
        <position position="210"/>
    </location>
</feature>
<gene>
    <name evidence="10" type="ORF">VD0003_g7577</name>
    <name evidence="11" type="ORF">VDGD_07784</name>
    <name evidence="12" type="ORF">VDGE_07784</name>
    <name evidence="7" type="ORF">VEDA_01118</name>
</gene>
<protein>
    <recommendedName>
        <fullName evidence="7">Cutinase 11</fullName>
        <ecNumber evidence="9">3.1.1.74</ecNumber>
    </recommendedName>
    <alternativeName>
        <fullName evidence="7">VdCUT11</fullName>
    </alternativeName>
</protein>
<dbReference type="EC" id="3.1.1.74" evidence="9"/>
<dbReference type="EMBL" id="PHNV01000284">
    <property type="protein sequence ID" value="PNH49577.1"/>
    <property type="molecule type" value="Genomic_DNA"/>
</dbReference>
<dbReference type="EMBL" id="CM010348">
    <property type="protein sequence ID" value="RBQ90445.1"/>
    <property type="molecule type" value="Genomic_DNA"/>
</dbReference>
<dbReference type="EMBL" id="RSDZ01000132">
    <property type="protein sequence ID" value="RXG42413.1"/>
    <property type="molecule type" value="Genomic_DNA"/>
</dbReference>
<dbReference type="SMR" id="A0A2J8C362"/>
<dbReference type="OMA" id="CPNTREV"/>
<dbReference type="OrthoDB" id="6020543at2759"/>
<dbReference type="Proteomes" id="UP000288725">
    <property type="component" value="Chromosome 2"/>
</dbReference>
<dbReference type="GO" id="GO:0005576">
    <property type="term" value="C:extracellular region"/>
    <property type="evidence" value="ECO:0007669"/>
    <property type="project" value="UniProtKB-SubCell"/>
</dbReference>
<dbReference type="GO" id="GO:0052689">
    <property type="term" value="F:carboxylic ester hydrolase activity"/>
    <property type="evidence" value="ECO:0000314"/>
    <property type="project" value="UniProtKB"/>
</dbReference>
<dbReference type="GO" id="GO:0030248">
    <property type="term" value="F:cellulose binding"/>
    <property type="evidence" value="ECO:0007669"/>
    <property type="project" value="InterPro"/>
</dbReference>
<dbReference type="GO" id="GO:0005975">
    <property type="term" value="P:carbohydrate metabolic process"/>
    <property type="evidence" value="ECO:0007669"/>
    <property type="project" value="InterPro"/>
</dbReference>
<dbReference type="GO" id="GO:0044409">
    <property type="term" value="P:symbiont entry into host"/>
    <property type="evidence" value="ECO:0000315"/>
    <property type="project" value="UniProtKB"/>
</dbReference>
<dbReference type="Gene3D" id="3.40.50.1820">
    <property type="entry name" value="alpha/beta hydrolase"/>
    <property type="match status" value="1"/>
</dbReference>
<dbReference type="InterPro" id="IPR029058">
    <property type="entry name" value="AB_hydrolase_fold"/>
</dbReference>
<dbReference type="InterPro" id="IPR035971">
    <property type="entry name" value="CBD_sf"/>
</dbReference>
<dbReference type="InterPro" id="IPR000254">
    <property type="entry name" value="Cellulose-bd_dom_fun"/>
</dbReference>
<dbReference type="InterPro" id="IPR000675">
    <property type="entry name" value="Cutinase/axe"/>
</dbReference>
<dbReference type="PANTHER" id="PTHR33630:SF13">
    <property type="entry name" value="ACETYLXYLAN ESTERASE"/>
    <property type="match status" value="1"/>
</dbReference>
<dbReference type="PANTHER" id="PTHR33630">
    <property type="entry name" value="CUTINASE RV1984C-RELATED-RELATED"/>
    <property type="match status" value="1"/>
</dbReference>
<dbReference type="Pfam" id="PF00734">
    <property type="entry name" value="CBM_1"/>
    <property type="match status" value="1"/>
</dbReference>
<dbReference type="Pfam" id="PF01083">
    <property type="entry name" value="Cutinase"/>
    <property type="match status" value="1"/>
</dbReference>
<dbReference type="SMART" id="SM01110">
    <property type="entry name" value="Cutinase"/>
    <property type="match status" value="1"/>
</dbReference>
<dbReference type="SMART" id="SM00236">
    <property type="entry name" value="fCBD"/>
    <property type="match status" value="1"/>
</dbReference>
<dbReference type="SUPFAM" id="SSF53474">
    <property type="entry name" value="alpha/beta-Hydrolases"/>
    <property type="match status" value="1"/>
</dbReference>
<dbReference type="SUPFAM" id="SSF57180">
    <property type="entry name" value="Cellulose-binding domain"/>
    <property type="match status" value="1"/>
</dbReference>
<dbReference type="PROSITE" id="PS00562">
    <property type="entry name" value="CBM1_1"/>
    <property type="match status" value="1"/>
</dbReference>
<dbReference type="PROSITE" id="PS51164">
    <property type="entry name" value="CBM1_2"/>
    <property type="match status" value="1"/>
</dbReference>
<reference key="1">
    <citation type="submission" date="2017-12" db="EMBL/GenBank/DDBJ databases">
        <title>Vegetative compatibility groups explain variation in the virulence of Verticillium dahliae on strawberry.</title>
        <authorList>
            <person name="Armitage A."/>
            <person name="Cockerton H."/>
            <person name="Fan R."/>
            <person name="Harrison R."/>
        </authorList>
    </citation>
    <scope>NUCLEOTIDE SEQUENCE [LARGE SCALE GENOMIC DNA]</scope>
    <source>
        <strain>12251</strain>
    </source>
</reference>
<reference key="2">
    <citation type="submission" date="2018-05" db="EMBL/GenBank/DDBJ databases">
        <title>Genome of an Australian isolate of Verticillium dahliae pathogenic on cotton.</title>
        <authorList>
            <person name="Gardiner D.M."/>
        </authorList>
    </citation>
    <scope>NUCLEOTIDE SEQUENCE [LARGE SCALE GENOMIC DNA]</scope>
    <source>
        <strain>Gwydir1A3</strain>
    </source>
</reference>
<reference evidence="13" key="3">
    <citation type="submission" date="2018-12" db="EMBL/GenBank/DDBJ databases">
        <title>Genome of Verticillium dahliae isolate Getta Getta.</title>
        <authorList>
            <person name="Gardiner D.M."/>
        </authorList>
    </citation>
    <scope>NUCLEOTIDE SEQUENCE [LARGE SCALE GENOMIC DNA]</scope>
    <source>
        <strain>Getta Getta</strain>
    </source>
</reference>
<reference evidence="8" key="4">
    <citation type="journal article" date="2018" name="Mol. Plant Microbe Interact.">
        <title>A Verticillium dahliae Extracellular Cutinase Modulates Plant Immune Responses.</title>
        <authorList>
            <person name="Gui Y.J."/>
            <person name="Zhang W.Q."/>
            <person name="Zhang D.D."/>
            <person name="Zhou L."/>
            <person name="Short D.P.G."/>
            <person name="Wang J."/>
            <person name="Ma X.F."/>
            <person name="Li T.G."/>
            <person name="Kong Z.Q."/>
            <person name="Wang B.L."/>
            <person name="Wang D."/>
            <person name="Li N.Y."/>
            <person name="Subbarao K.V."/>
            <person name="Chen J.Y."/>
            <person name="Dai X.F."/>
        </authorList>
    </citation>
    <scope>FUNCTION</scope>
    <scope>SUBCELLULAR LOCATION</scope>
    <scope>INDUCTION</scope>
    <scope>DISRUPTION PHENOTYPE</scope>
    <scope>ACTIVE SITE</scope>
    <scope>MUTAGENESIS OF SER-113; ASP-198 AND HIS-210</scope>
    <source>
        <strain>Vd991</strain>
    </source>
</reference>
<sequence length="295" mass="29632">MQTSALLLAAQALVASAGLIERQSCPSIHVFGARETTVGPGYGSAGTVVNLILNAYPGSTAEAIVYPACGGQSSCGGISYGNSAMQGTNAVASAVNSFNQRCPNTQIVLVGYSQGGQIMDNALCGGGDPGSGITNTAVPLTASAVTAVKAAILMGSPRYRAGFPYNVGTCTAQGFAARPAGFVCPSGSKIQNYCDSPDPYCCTGNNQAVHQGYGGVYGQAALTFVRSKLNSGGSPPTTPPTTPPTTPPTTPPTTPPPSGSCAALYGQCGGQGWNGATCCSQGTCRASNQWYSQCL</sequence>
<proteinExistence type="evidence at protein level"/>
<comment type="function">
    <text evidence="1 6">Catalyzes the hydrolysis of complex carboxylic polyesters found in the cell wall of plants (PubMed:29068240). May degrade cutin, a macromolecule that forms the structure of the plant cuticle (PubMed:29068240). May also degrade suberin, a specialized macromolecule found in the cell wall of various plant tissues (PubMed:29068240). Allows pathogenic fungi to penetrate through the cuticular barrier into the host plant during the initial stage of fungal infection (By similarity). Involved in pathogenesis (PubMed:29068240).</text>
</comment>
<comment type="catalytic activity">
    <reaction evidence="9">
        <text>cutin + H2O = cutin monomers.</text>
        <dbReference type="EC" id="3.1.1.74"/>
    </reaction>
</comment>
<comment type="subcellular location">
    <subcellularLocation>
        <location evidence="6">Secreted</location>
    </subcellularLocation>
</comment>
<comment type="induction">
    <text evidence="6">Induced during infection of cotton.</text>
</comment>
<comment type="PTM">
    <text evidence="2">The 2 disulfide bonds play a critical role in holding the catalytic residues in juxta-position; reduction of the disulfide bridges results in the complete inactivation of the enzyme.</text>
</comment>
<comment type="disruption phenotype">
    <text evidence="6">Normal cell population growth and colony morphology.</text>
</comment>
<comment type="similarity">
    <text evidence="8">Belongs to the cutinase family.</text>
</comment>
<accession>A0A2J8C362</accession>
<organism>
    <name type="scientific">Verticillium dahliae</name>
    <name type="common">Verticillium wilt</name>
    <dbReference type="NCBI Taxonomy" id="27337"/>
    <lineage>
        <taxon>Eukaryota</taxon>
        <taxon>Fungi</taxon>
        <taxon>Dikarya</taxon>
        <taxon>Ascomycota</taxon>
        <taxon>Pezizomycotina</taxon>
        <taxon>Sordariomycetes</taxon>
        <taxon>Hypocreomycetidae</taxon>
        <taxon>Glomerellales</taxon>
        <taxon>Plectosphaerellaceae</taxon>
        <taxon>Verticillium</taxon>
    </lineage>
</organism>